<reference key="1">
    <citation type="journal article" date="2004" name="Nat. Genet.">
        <title>Comparison of genome degradation in Paratyphi A and Typhi, human-restricted serovars of Salmonella enterica that cause typhoid.</title>
        <authorList>
            <person name="McClelland M."/>
            <person name="Sanderson K.E."/>
            <person name="Clifton S.W."/>
            <person name="Latreille P."/>
            <person name="Porwollik S."/>
            <person name="Sabo A."/>
            <person name="Meyer R."/>
            <person name="Bieri T."/>
            <person name="Ozersky P."/>
            <person name="McLellan M."/>
            <person name="Harkins C.R."/>
            <person name="Wang C."/>
            <person name="Nguyen C."/>
            <person name="Berghoff A."/>
            <person name="Elliott G."/>
            <person name="Kohlberg S."/>
            <person name="Strong C."/>
            <person name="Du F."/>
            <person name="Carter J."/>
            <person name="Kremizki C."/>
            <person name="Layman D."/>
            <person name="Leonard S."/>
            <person name="Sun H."/>
            <person name="Fulton L."/>
            <person name="Nash W."/>
            <person name="Miner T."/>
            <person name="Minx P."/>
            <person name="Delehaunty K."/>
            <person name="Fronick C."/>
            <person name="Magrini V."/>
            <person name="Nhan M."/>
            <person name="Warren W."/>
            <person name="Florea L."/>
            <person name="Spieth J."/>
            <person name="Wilson R.K."/>
        </authorList>
    </citation>
    <scope>NUCLEOTIDE SEQUENCE [LARGE SCALE GENOMIC DNA]</scope>
    <source>
        <strain>ATCC 9150 / SARB42</strain>
    </source>
</reference>
<dbReference type="EC" id="3.1.21.10" evidence="1"/>
<dbReference type="EMBL" id="CP000026">
    <property type="protein sequence ID" value="AAV76946.1"/>
    <property type="molecule type" value="Genomic_DNA"/>
</dbReference>
<dbReference type="RefSeq" id="WP_000022509.1">
    <property type="nucleotide sequence ID" value="NC_006511.1"/>
</dbReference>
<dbReference type="SMR" id="Q5PN00"/>
<dbReference type="GeneID" id="93033412"/>
<dbReference type="KEGG" id="spt:SPA0971"/>
<dbReference type="HOGENOM" id="CLU_091257_2_1_6"/>
<dbReference type="Proteomes" id="UP000008185">
    <property type="component" value="Chromosome"/>
</dbReference>
<dbReference type="GO" id="GO:0005737">
    <property type="term" value="C:cytoplasm"/>
    <property type="evidence" value="ECO:0007669"/>
    <property type="project" value="UniProtKB-SubCell"/>
</dbReference>
<dbReference type="GO" id="GO:0048476">
    <property type="term" value="C:Holliday junction resolvase complex"/>
    <property type="evidence" value="ECO:0007669"/>
    <property type="project" value="UniProtKB-UniRule"/>
</dbReference>
<dbReference type="GO" id="GO:0008821">
    <property type="term" value="F:crossover junction DNA endonuclease activity"/>
    <property type="evidence" value="ECO:0007669"/>
    <property type="project" value="UniProtKB-UniRule"/>
</dbReference>
<dbReference type="GO" id="GO:0003677">
    <property type="term" value="F:DNA binding"/>
    <property type="evidence" value="ECO:0007669"/>
    <property type="project" value="UniProtKB-KW"/>
</dbReference>
<dbReference type="GO" id="GO:0000287">
    <property type="term" value="F:magnesium ion binding"/>
    <property type="evidence" value="ECO:0007669"/>
    <property type="project" value="UniProtKB-UniRule"/>
</dbReference>
<dbReference type="GO" id="GO:0006310">
    <property type="term" value="P:DNA recombination"/>
    <property type="evidence" value="ECO:0007669"/>
    <property type="project" value="UniProtKB-UniRule"/>
</dbReference>
<dbReference type="GO" id="GO:0006281">
    <property type="term" value="P:DNA repair"/>
    <property type="evidence" value="ECO:0007669"/>
    <property type="project" value="UniProtKB-UniRule"/>
</dbReference>
<dbReference type="CDD" id="cd16962">
    <property type="entry name" value="RuvC"/>
    <property type="match status" value="1"/>
</dbReference>
<dbReference type="FunFam" id="3.30.420.10:FF:000002">
    <property type="entry name" value="Crossover junction endodeoxyribonuclease RuvC"/>
    <property type="match status" value="1"/>
</dbReference>
<dbReference type="Gene3D" id="3.30.420.10">
    <property type="entry name" value="Ribonuclease H-like superfamily/Ribonuclease H"/>
    <property type="match status" value="1"/>
</dbReference>
<dbReference type="HAMAP" id="MF_00034">
    <property type="entry name" value="RuvC"/>
    <property type="match status" value="1"/>
</dbReference>
<dbReference type="InterPro" id="IPR012337">
    <property type="entry name" value="RNaseH-like_sf"/>
</dbReference>
<dbReference type="InterPro" id="IPR036397">
    <property type="entry name" value="RNaseH_sf"/>
</dbReference>
<dbReference type="InterPro" id="IPR020563">
    <property type="entry name" value="X-over_junc_endoDNase_Mg_BS"/>
</dbReference>
<dbReference type="InterPro" id="IPR002176">
    <property type="entry name" value="X-over_junc_endoDNase_RuvC"/>
</dbReference>
<dbReference type="NCBIfam" id="NF000711">
    <property type="entry name" value="PRK00039.2-1"/>
    <property type="match status" value="1"/>
</dbReference>
<dbReference type="NCBIfam" id="TIGR00228">
    <property type="entry name" value="ruvC"/>
    <property type="match status" value="1"/>
</dbReference>
<dbReference type="PANTHER" id="PTHR30194">
    <property type="entry name" value="CROSSOVER JUNCTION ENDODEOXYRIBONUCLEASE RUVC"/>
    <property type="match status" value="1"/>
</dbReference>
<dbReference type="PANTHER" id="PTHR30194:SF3">
    <property type="entry name" value="CROSSOVER JUNCTION ENDODEOXYRIBONUCLEASE RUVC"/>
    <property type="match status" value="1"/>
</dbReference>
<dbReference type="Pfam" id="PF02075">
    <property type="entry name" value="RuvC"/>
    <property type="match status" value="1"/>
</dbReference>
<dbReference type="PRINTS" id="PR00696">
    <property type="entry name" value="RSOLVASERUVC"/>
</dbReference>
<dbReference type="SUPFAM" id="SSF53098">
    <property type="entry name" value="Ribonuclease H-like"/>
    <property type="match status" value="1"/>
</dbReference>
<dbReference type="PROSITE" id="PS01321">
    <property type="entry name" value="RUVC"/>
    <property type="match status" value="1"/>
</dbReference>
<organism>
    <name type="scientific">Salmonella paratyphi A (strain ATCC 9150 / SARB42)</name>
    <dbReference type="NCBI Taxonomy" id="295319"/>
    <lineage>
        <taxon>Bacteria</taxon>
        <taxon>Pseudomonadati</taxon>
        <taxon>Pseudomonadota</taxon>
        <taxon>Gammaproteobacteria</taxon>
        <taxon>Enterobacterales</taxon>
        <taxon>Enterobacteriaceae</taxon>
        <taxon>Salmonella</taxon>
    </lineage>
</organism>
<name>RUVC_SALPA</name>
<keyword id="KW-0963">Cytoplasm</keyword>
<keyword id="KW-0227">DNA damage</keyword>
<keyword id="KW-0233">DNA recombination</keyword>
<keyword id="KW-0234">DNA repair</keyword>
<keyword id="KW-0238">DNA-binding</keyword>
<keyword id="KW-0255">Endonuclease</keyword>
<keyword id="KW-0378">Hydrolase</keyword>
<keyword id="KW-0460">Magnesium</keyword>
<keyword id="KW-0479">Metal-binding</keyword>
<keyword id="KW-0540">Nuclease</keyword>
<feature type="chain" id="PRO_0000225175" description="Crossover junction endodeoxyribonuclease RuvC">
    <location>
        <begin position="1"/>
        <end position="173"/>
    </location>
</feature>
<feature type="active site" evidence="1">
    <location>
        <position position="8"/>
    </location>
</feature>
<feature type="active site" evidence="1">
    <location>
        <position position="67"/>
    </location>
</feature>
<feature type="active site" evidence="1">
    <location>
        <position position="139"/>
    </location>
</feature>
<feature type="binding site" evidence="1">
    <location>
        <position position="8"/>
    </location>
    <ligand>
        <name>Mg(2+)</name>
        <dbReference type="ChEBI" id="CHEBI:18420"/>
        <label>1</label>
    </ligand>
</feature>
<feature type="binding site" evidence="1">
    <location>
        <position position="67"/>
    </location>
    <ligand>
        <name>Mg(2+)</name>
        <dbReference type="ChEBI" id="CHEBI:18420"/>
        <label>2</label>
    </ligand>
</feature>
<feature type="binding site" evidence="1">
    <location>
        <position position="139"/>
    </location>
    <ligand>
        <name>Mg(2+)</name>
        <dbReference type="ChEBI" id="CHEBI:18420"/>
        <label>1</label>
    </ligand>
</feature>
<proteinExistence type="inferred from homology"/>
<protein>
    <recommendedName>
        <fullName evidence="1">Crossover junction endodeoxyribonuclease RuvC</fullName>
        <ecNumber evidence="1">3.1.21.10</ecNumber>
    </recommendedName>
    <alternativeName>
        <fullName evidence="1">Holliday junction nuclease RuvC</fullName>
    </alternativeName>
    <alternativeName>
        <fullName evidence="1">Holliday junction resolvase RuvC</fullName>
    </alternativeName>
</protein>
<accession>Q5PN00</accession>
<gene>
    <name evidence="1" type="primary">ruvC</name>
    <name type="ordered locus">SPA0971</name>
</gene>
<comment type="function">
    <text evidence="1">The RuvA-RuvB-RuvC complex processes Holliday junction (HJ) DNA during genetic recombination and DNA repair. Endonuclease that resolves HJ intermediates. Cleaves cruciform DNA by making single-stranded nicks across the HJ at symmetrical positions within the homologous arms, yielding a 5'-phosphate and a 3'-hydroxyl group; requires a central core of homology in the junction. The consensus cleavage sequence is 5'-(A/T)TT(C/G)-3'. Cleavage occurs on the 3'-side of the TT dinucleotide at the point of strand exchange. HJ branch migration catalyzed by RuvA-RuvB allows RuvC to scan DNA until it finds its consensus sequence, where it cleaves and resolves the cruciform DNA.</text>
</comment>
<comment type="catalytic activity">
    <reaction evidence="1">
        <text>Endonucleolytic cleavage at a junction such as a reciprocal single-stranded crossover between two homologous DNA duplexes (Holliday junction).</text>
        <dbReference type="EC" id="3.1.21.10"/>
    </reaction>
</comment>
<comment type="cofactor">
    <cofactor evidence="1">
        <name>Mg(2+)</name>
        <dbReference type="ChEBI" id="CHEBI:18420"/>
    </cofactor>
    <text evidence="1">Binds 2 Mg(2+) ion per subunit.</text>
</comment>
<comment type="subunit">
    <text evidence="1">Homodimer which binds Holliday junction (HJ) DNA. The HJ becomes 2-fold symmetrical on binding to RuvC with unstacked arms; it has a different conformation from HJ DNA in complex with RuvA. In the full resolvosome a probable DNA-RuvA(4)-RuvB(12)-RuvC(2) complex forms which resolves the HJ.</text>
</comment>
<comment type="subcellular location">
    <subcellularLocation>
        <location evidence="1">Cytoplasm</location>
    </subcellularLocation>
</comment>
<comment type="similarity">
    <text evidence="1">Belongs to the RuvC family.</text>
</comment>
<evidence type="ECO:0000255" key="1">
    <source>
        <dbReference type="HAMAP-Rule" id="MF_00034"/>
    </source>
</evidence>
<sequence>MSIILGIDPGSRITGYGVIRQVGRQLTYLGSGCIRTKVDDLPSRLKLIYAGVTEIITQFQPDYFAIEQVFMAKNADSALKLGQARGVAIVAAVNQELPVFEYAARQVKQTVVGIGSAEKSQVQHMVRTLLKLPANPQADAADALAIAITHCHVSQNAMQMSESRLNLARGRLR</sequence>